<dbReference type="EC" id="3.4.23.51" evidence="2"/>
<dbReference type="EMBL" id="AE005174">
    <property type="protein sequence ID" value="AAG57824.1"/>
    <property type="molecule type" value="Genomic_DNA"/>
</dbReference>
<dbReference type="EMBL" id="BA000007">
    <property type="protein sequence ID" value="BAB36996.1"/>
    <property type="molecule type" value="Genomic_DNA"/>
</dbReference>
<dbReference type="PIR" id="D85920">
    <property type="entry name" value="D85920"/>
</dbReference>
<dbReference type="PIR" id="E91075">
    <property type="entry name" value="E91075"/>
</dbReference>
<dbReference type="RefSeq" id="NP_311600.1">
    <property type="nucleotide sequence ID" value="NC_002695.1"/>
</dbReference>
<dbReference type="RefSeq" id="WP_000132961.1">
    <property type="nucleotide sequence ID" value="NZ_VOAI01000003.1"/>
</dbReference>
<dbReference type="SMR" id="P0AEW0"/>
<dbReference type="STRING" id="155864.Z4025"/>
<dbReference type="MEROPS" id="A31.003"/>
<dbReference type="GeneID" id="914705"/>
<dbReference type="GeneID" id="93779291"/>
<dbReference type="KEGG" id="ece:Z4025"/>
<dbReference type="KEGG" id="ecs:ECs_3573"/>
<dbReference type="PATRIC" id="fig|386585.9.peg.3734"/>
<dbReference type="eggNOG" id="COG0680">
    <property type="taxonomic scope" value="Bacteria"/>
</dbReference>
<dbReference type="HOGENOM" id="CLU_099037_4_0_6"/>
<dbReference type="OMA" id="EMCAANP"/>
<dbReference type="Proteomes" id="UP000000558">
    <property type="component" value="Chromosome"/>
</dbReference>
<dbReference type="Proteomes" id="UP000002519">
    <property type="component" value="Chromosome"/>
</dbReference>
<dbReference type="GO" id="GO:0004190">
    <property type="term" value="F:aspartic-type endopeptidase activity"/>
    <property type="evidence" value="ECO:0007669"/>
    <property type="project" value="UniProtKB-KW"/>
</dbReference>
<dbReference type="GO" id="GO:0008047">
    <property type="term" value="F:enzyme activator activity"/>
    <property type="evidence" value="ECO:0007669"/>
    <property type="project" value="InterPro"/>
</dbReference>
<dbReference type="GO" id="GO:0046872">
    <property type="term" value="F:metal ion binding"/>
    <property type="evidence" value="ECO:0007669"/>
    <property type="project" value="UniProtKB-KW"/>
</dbReference>
<dbReference type="GO" id="GO:0016485">
    <property type="term" value="P:protein processing"/>
    <property type="evidence" value="ECO:0007669"/>
    <property type="project" value="TreeGrafter"/>
</dbReference>
<dbReference type="CDD" id="cd06067">
    <property type="entry name" value="H2MP_MemB-H2evol"/>
    <property type="match status" value="1"/>
</dbReference>
<dbReference type="FunFam" id="3.40.50.1450:FF:000003">
    <property type="entry name" value="Hydrogenase 3 maturation endopeptidase HyCI"/>
    <property type="match status" value="1"/>
</dbReference>
<dbReference type="Gene3D" id="3.40.50.1450">
    <property type="entry name" value="HybD-like"/>
    <property type="match status" value="1"/>
</dbReference>
<dbReference type="InterPro" id="IPR004420">
    <property type="entry name" value="Pept_A31_hyd_mat_HycI"/>
</dbReference>
<dbReference type="InterPro" id="IPR023430">
    <property type="entry name" value="Pept_HybD-like_dom_sf"/>
</dbReference>
<dbReference type="InterPro" id="IPR000671">
    <property type="entry name" value="Peptidase_A31"/>
</dbReference>
<dbReference type="NCBIfam" id="TIGR00142">
    <property type="entry name" value="hycI"/>
    <property type="match status" value="1"/>
</dbReference>
<dbReference type="NCBIfam" id="TIGR00072">
    <property type="entry name" value="hydrog_prot"/>
    <property type="match status" value="1"/>
</dbReference>
<dbReference type="PANTHER" id="PTHR30302">
    <property type="entry name" value="HYDROGENASE 1 MATURATION PROTEASE"/>
    <property type="match status" value="1"/>
</dbReference>
<dbReference type="PANTHER" id="PTHR30302:SF4">
    <property type="entry name" value="HYDROGENASE 3 MATURATION PROTEASE"/>
    <property type="match status" value="1"/>
</dbReference>
<dbReference type="Pfam" id="PF01750">
    <property type="entry name" value="HycI"/>
    <property type="match status" value="1"/>
</dbReference>
<dbReference type="PRINTS" id="PR00446">
    <property type="entry name" value="HYDRGNUPTAKE"/>
</dbReference>
<dbReference type="SUPFAM" id="SSF53163">
    <property type="entry name" value="HybD-like"/>
    <property type="match status" value="1"/>
</dbReference>
<gene>
    <name type="primary">hycI</name>
    <name type="ordered locus">Z4025</name>
    <name type="ordered locus">ECs3573</name>
</gene>
<organism>
    <name type="scientific">Escherichia coli O157:H7</name>
    <dbReference type="NCBI Taxonomy" id="83334"/>
    <lineage>
        <taxon>Bacteria</taxon>
        <taxon>Pseudomonadati</taxon>
        <taxon>Pseudomonadota</taxon>
        <taxon>Gammaproteobacteria</taxon>
        <taxon>Enterobacterales</taxon>
        <taxon>Enterobacteriaceae</taxon>
        <taxon>Escherichia</taxon>
    </lineage>
</organism>
<evidence type="ECO:0000250" key="1"/>
<evidence type="ECO:0000250" key="2">
    <source>
        <dbReference type="UniProtKB" id="P0AEV9"/>
    </source>
</evidence>
<evidence type="ECO:0000305" key="3"/>
<accession>P0AEW0</accession>
<accession>Q57451</accession>
<sequence length="156" mass="17057">MTDVLLCVGNSMMGDDGAGPLLAEKCAAAPKGNWVVIDGGSAPENDIVAIRELRPTRLLIVDATDMGLNPGEIRIIDPDDIAEMFMMTTHNMPLNYLIDQLKEDIGEVIFLGIQPDIVGFYYPMTQPIKDAVETVYQRLEGWEGNGGFAQLAVEEE</sequence>
<reference key="1">
    <citation type="journal article" date="2001" name="Nature">
        <title>Genome sequence of enterohaemorrhagic Escherichia coli O157:H7.</title>
        <authorList>
            <person name="Perna N.T."/>
            <person name="Plunkett G. III"/>
            <person name="Burland V."/>
            <person name="Mau B."/>
            <person name="Glasner J.D."/>
            <person name="Rose D.J."/>
            <person name="Mayhew G.F."/>
            <person name="Evans P.S."/>
            <person name="Gregor J."/>
            <person name="Kirkpatrick H.A."/>
            <person name="Posfai G."/>
            <person name="Hackett J."/>
            <person name="Klink S."/>
            <person name="Boutin A."/>
            <person name="Shao Y."/>
            <person name="Miller L."/>
            <person name="Grotbeck E.J."/>
            <person name="Davis N.W."/>
            <person name="Lim A."/>
            <person name="Dimalanta E.T."/>
            <person name="Potamousis K."/>
            <person name="Apodaca J."/>
            <person name="Anantharaman T.S."/>
            <person name="Lin J."/>
            <person name="Yen G."/>
            <person name="Schwartz D.C."/>
            <person name="Welch R.A."/>
            <person name="Blattner F.R."/>
        </authorList>
    </citation>
    <scope>NUCLEOTIDE SEQUENCE [LARGE SCALE GENOMIC DNA]</scope>
    <source>
        <strain>O157:H7 / EDL933 / ATCC 700927 / EHEC</strain>
    </source>
</reference>
<reference key="2">
    <citation type="journal article" date="2001" name="DNA Res.">
        <title>Complete genome sequence of enterohemorrhagic Escherichia coli O157:H7 and genomic comparison with a laboratory strain K-12.</title>
        <authorList>
            <person name="Hayashi T."/>
            <person name="Makino K."/>
            <person name="Ohnishi M."/>
            <person name="Kurokawa K."/>
            <person name="Ishii K."/>
            <person name="Yokoyama K."/>
            <person name="Han C.-G."/>
            <person name="Ohtsubo E."/>
            <person name="Nakayama K."/>
            <person name="Murata T."/>
            <person name="Tanaka M."/>
            <person name="Tobe T."/>
            <person name="Iida T."/>
            <person name="Takami H."/>
            <person name="Honda T."/>
            <person name="Sasakawa C."/>
            <person name="Ogasawara N."/>
            <person name="Yasunaga T."/>
            <person name="Kuhara S."/>
            <person name="Shiba T."/>
            <person name="Hattori M."/>
            <person name="Shinagawa H."/>
        </authorList>
    </citation>
    <scope>NUCLEOTIDE SEQUENCE [LARGE SCALE GENOMIC DNA]</scope>
    <source>
        <strain>O157:H7 / Sakai / RIMD 0509952 / EHEC</strain>
    </source>
</reference>
<comment type="function">
    <text evidence="2">Protease involved in the C-terminal processing of HycE, the large subunit of hydrogenase 3.</text>
</comment>
<comment type="catalytic activity">
    <reaction evidence="2">
        <text>This enzyme specifically removes a 32-amino acid peptide from the C-terminus of the precursor of the large subunit of E.coli hydrogenase 3 by cleavage at the C-terminal side of Arg-537.</text>
        <dbReference type="EC" id="3.4.23.51"/>
    </reaction>
</comment>
<comment type="subunit">
    <text evidence="2">Monomer.</text>
</comment>
<comment type="similarity">
    <text evidence="3">Belongs to the peptidase A31 family.</text>
</comment>
<keyword id="KW-0064">Aspartyl protease</keyword>
<keyword id="KW-0378">Hydrolase</keyword>
<keyword id="KW-0479">Metal-binding</keyword>
<keyword id="KW-0533">Nickel</keyword>
<keyword id="KW-0645">Protease</keyword>
<keyword id="KW-1185">Reference proteome</keyword>
<name>HYCI_ECO57</name>
<proteinExistence type="inferred from homology"/>
<protein>
    <recommendedName>
        <fullName>Hydrogenase 3 maturation protease</fullName>
        <ecNumber evidence="2">3.4.23.51</ecNumber>
    </recommendedName>
    <alternativeName>
        <fullName>HycI protease</fullName>
    </alternativeName>
</protein>
<feature type="initiator methionine" description="Removed" evidence="1">
    <location>
        <position position="1"/>
    </location>
</feature>
<feature type="chain" id="PRO_0000201945" description="Hydrogenase 3 maturation protease">
    <location>
        <begin position="2"/>
        <end position="156"/>
    </location>
</feature>
<feature type="binding site" evidence="1">
    <location>
        <position position="16"/>
    </location>
    <ligand>
        <name>Ni(2+)</name>
        <dbReference type="ChEBI" id="CHEBI:49786"/>
    </ligand>
</feature>
<feature type="binding site" evidence="1">
    <location>
        <position position="62"/>
    </location>
    <ligand>
        <name>Ni(2+)</name>
        <dbReference type="ChEBI" id="CHEBI:49786"/>
    </ligand>
</feature>
<feature type="binding site" evidence="1">
    <location>
        <position position="90"/>
    </location>
    <ligand>
        <name>Ni(2+)</name>
        <dbReference type="ChEBI" id="CHEBI:49786"/>
    </ligand>
</feature>